<reference key="1">
    <citation type="journal article" date="2007" name="Photosyn. Res.">
        <title>Complete nucleotide sequence of the freshwater unicellular cyanobacterium Synechococcus elongatus PCC 6301 chromosome: gene content and organization.</title>
        <authorList>
            <person name="Sugita C."/>
            <person name="Ogata K."/>
            <person name="Shikata M."/>
            <person name="Jikuya H."/>
            <person name="Takano J."/>
            <person name="Furumichi M."/>
            <person name="Kanehisa M."/>
            <person name="Omata T."/>
            <person name="Sugiura M."/>
            <person name="Sugita M."/>
        </authorList>
    </citation>
    <scope>NUCLEOTIDE SEQUENCE [LARGE SCALE GENOMIC DNA]</scope>
    <source>
        <strain>ATCC 27144 / PCC 6301 / SAUG 1402/1</strain>
    </source>
</reference>
<proteinExistence type="inferred from homology"/>
<sequence>MLLKSTTRHIRIFTAEIEGNELQPSDTVLTLDVDPDNEFNWNEEALQKVYRQFDDLVESYAGQELSEYNLRRIGSELEVLLRQMLQAGEISYNLNCRVLNYSMGVPQAVV</sequence>
<dbReference type="EC" id="7.1.1.-" evidence="1"/>
<dbReference type="EMBL" id="AP008231">
    <property type="protein sequence ID" value="BAD80304.1"/>
    <property type="molecule type" value="Genomic_DNA"/>
</dbReference>
<dbReference type="RefSeq" id="WP_011244424.1">
    <property type="nucleotide sequence ID" value="NZ_CP085785.1"/>
</dbReference>
<dbReference type="SMR" id="Q5N066"/>
<dbReference type="KEGG" id="syc:syc2114_d"/>
<dbReference type="eggNOG" id="ENOG5031AQM">
    <property type="taxonomic scope" value="Bacteria"/>
</dbReference>
<dbReference type="Proteomes" id="UP000001175">
    <property type="component" value="Chromosome"/>
</dbReference>
<dbReference type="GO" id="GO:0031676">
    <property type="term" value="C:plasma membrane-derived thylakoid membrane"/>
    <property type="evidence" value="ECO:0007669"/>
    <property type="project" value="UniProtKB-SubCell"/>
</dbReference>
<dbReference type="GO" id="GO:0016655">
    <property type="term" value="F:oxidoreductase activity, acting on NAD(P)H, quinone or similar compound as acceptor"/>
    <property type="evidence" value="ECO:0007669"/>
    <property type="project" value="UniProtKB-UniRule"/>
</dbReference>
<dbReference type="GO" id="GO:0048038">
    <property type="term" value="F:quinone binding"/>
    <property type="evidence" value="ECO:0007669"/>
    <property type="project" value="UniProtKB-KW"/>
</dbReference>
<dbReference type="HAMAP" id="MF_01352">
    <property type="entry name" value="NDH1_NDH1M"/>
    <property type="match status" value="1"/>
</dbReference>
<dbReference type="InterPro" id="IPR018922">
    <property type="entry name" value="NdhM"/>
</dbReference>
<dbReference type="PANTHER" id="PTHR36900">
    <property type="entry name" value="NAD(P)H-QUINONE OXIDOREDUCTASE SUBUNIT M, CHLOROPLASTIC"/>
    <property type="match status" value="1"/>
</dbReference>
<dbReference type="PANTHER" id="PTHR36900:SF1">
    <property type="entry name" value="NAD(P)H-QUINONE OXIDOREDUCTASE SUBUNIT M, CHLOROPLASTIC"/>
    <property type="match status" value="1"/>
</dbReference>
<dbReference type="Pfam" id="PF10664">
    <property type="entry name" value="NdhM"/>
    <property type="match status" value="1"/>
</dbReference>
<keyword id="KW-0472">Membrane</keyword>
<keyword id="KW-0520">NAD</keyword>
<keyword id="KW-0521">NADP</keyword>
<keyword id="KW-0618">Plastoquinone</keyword>
<keyword id="KW-0874">Quinone</keyword>
<keyword id="KW-0793">Thylakoid</keyword>
<keyword id="KW-1278">Translocase</keyword>
<keyword id="KW-0813">Transport</keyword>
<evidence type="ECO:0000255" key="1">
    <source>
        <dbReference type="HAMAP-Rule" id="MF_01352"/>
    </source>
</evidence>
<feature type="chain" id="PRO_0000352199" description="NAD(P)H-quinone oxidoreductase subunit M">
    <location>
        <begin position="1"/>
        <end position="110"/>
    </location>
</feature>
<organism>
    <name type="scientific">Synechococcus sp. (strain ATCC 27144 / PCC 6301 / SAUG 1402/1)</name>
    <name type="common">Anacystis nidulans</name>
    <dbReference type="NCBI Taxonomy" id="269084"/>
    <lineage>
        <taxon>Bacteria</taxon>
        <taxon>Bacillati</taxon>
        <taxon>Cyanobacteriota</taxon>
        <taxon>Cyanophyceae</taxon>
        <taxon>Synechococcales</taxon>
        <taxon>Synechococcaceae</taxon>
        <taxon>Synechococcus</taxon>
    </lineage>
</organism>
<comment type="function">
    <text evidence="1">NDH-1 shuttles electrons from an unknown electron donor, via FMN and iron-sulfur (Fe-S) centers, to quinones in the respiratory and/or the photosynthetic chain. The immediate electron acceptor for the enzyme in this species is believed to be plastoquinone. Couples the redox reaction to proton translocation, and thus conserves the redox energy in a proton gradient. Cyanobacterial NDH-1 also plays a role in inorganic carbon-concentration.</text>
</comment>
<comment type="catalytic activity">
    <reaction evidence="1">
        <text>a plastoquinone + NADH + (n+1) H(+)(in) = a plastoquinol + NAD(+) + n H(+)(out)</text>
        <dbReference type="Rhea" id="RHEA:42608"/>
        <dbReference type="Rhea" id="RHEA-COMP:9561"/>
        <dbReference type="Rhea" id="RHEA-COMP:9562"/>
        <dbReference type="ChEBI" id="CHEBI:15378"/>
        <dbReference type="ChEBI" id="CHEBI:17757"/>
        <dbReference type="ChEBI" id="CHEBI:57540"/>
        <dbReference type="ChEBI" id="CHEBI:57945"/>
        <dbReference type="ChEBI" id="CHEBI:62192"/>
    </reaction>
</comment>
<comment type="catalytic activity">
    <reaction evidence="1">
        <text>a plastoquinone + NADPH + (n+1) H(+)(in) = a plastoquinol + NADP(+) + n H(+)(out)</text>
        <dbReference type="Rhea" id="RHEA:42612"/>
        <dbReference type="Rhea" id="RHEA-COMP:9561"/>
        <dbReference type="Rhea" id="RHEA-COMP:9562"/>
        <dbReference type="ChEBI" id="CHEBI:15378"/>
        <dbReference type="ChEBI" id="CHEBI:17757"/>
        <dbReference type="ChEBI" id="CHEBI:57783"/>
        <dbReference type="ChEBI" id="CHEBI:58349"/>
        <dbReference type="ChEBI" id="CHEBI:62192"/>
    </reaction>
</comment>
<comment type="subunit">
    <text evidence="1">NDH-1 can be composed of about 15 different subunits; different subcomplexes with different compositions have been identified which probably have different functions.</text>
</comment>
<comment type="subcellular location">
    <subcellularLocation>
        <location evidence="1">Cellular thylakoid membrane</location>
        <topology evidence="1">Peripheral membrane protein</topology>
        <orientation evidence="1">Cytoplasmic side</orientation>
    </subcellularLocation>
</comment>
<comment type="similarity">
    <text evidence="1">Belongs to the complex I NdhM subunit family.</text>
</comment>
<protein>
    <recommendedName>
        <fullName evidence="1">NAD(P)H-quinone oxidoreductase subunit M</fullName>
        <ecNumber evidence="1">7.1.1.-</ecNumber>
    </recommendedName>
    <alternativeName>
        <fullName evidence="1">NAD(P)H dehydrogenase I subunit M</fullName>
        <shortName evidence="1">NDH-1 subunit M</shortName>
        <shortName evidence="1">NDH-M</shortName>
    </alternativeName>
</protein>
<gene>
    <name evidence="1" type="primary">ndhM</name>
    <name type="ordered locus">syc2114_d</name>
</gene>
<name>NDHM_SYNP6</name>
<accession>Q5N066</accession>